<gene>
    <name evidence="1" type="primary">prfB</name>
    <name type="ordered locus">PMI2009</name>
</gene>
<comment type="function">
    <text evidence="1">Peptide chain release factor 2 directs the termination of translation in response to the peptide chain termination codons UGA and UAA.</text>
</comment>
<comment type="subcellular location">
    <subcellularLocation>
        <location evidence="1">Cytoplasm</location>
    </subcellularLocation>
</comment>
<comment type="PTM">
    <text evidence="1">Methylated by PrmC. Methylation increases the termination efficiency of RF2.</text>
</comment>
<comment type="similarity">
    <text evidence="1">Belongs to the prokaryotic/mitochondrial release factor family.</text>
</comment>
<reference key="1">
    <citation type="journal article" date="2008" name="J. Bacteriol.">
        <title>Complete genome sequence of uropathogenic Proteus mirabilis, a master of both adherence and motility.</title>
        <authorList>
            <person name="Pearson M.M."/>
            <person name="Sebaihia M."/>
            <person name="Churcher C."/>
            <person name="Quail M.A."/>
            <person name="Seshasayee A.S."/>
            <person name="Luscombe N.M."/>
            <person name="Abdellah Z."/>
            <person name="Arrosmith C."/>
            <person name="Atkin B."/>
            <person name="Chillingworth T."/>
            <person name="Hauser H."/>
            <person name="Jagels K."/>
            <person name="Moule S."/>
            <person name="Mungall K."/>
            <person name="Norbertczak H."/>
            <person name="Rabbinowitsch E."/>
            <person name="Walker D."/>
            <person name="Whithead S."/>
            <person name="Thomson N.R."/>
            <person name="Rather P.N."/>
            <person name="Parkhill J."/>
            <person name="Mobley H.L.T."/>
        </authorList>
    </citation>
    <scope>NUCLEOTIDE SEQUENCE [LARGE SCALE GENOMIC DNA]</scope>
    <source>
        <strain>HI4320</strain>
    </source>
</reference>
<proteinExistence type="inferred from homology"/>
<keyword id="KW-0963">Cytoplasm</keyword>
<keyword id="KW-0488">Methylation</keyword>
<keyword id="KW-0648">Protein biosynthesis</keyword>
<keyword id="KW-1185">Reference proteome</keyword>
<feature type="chain" id="PRO_1000093551" description="Peptide chain release factor 2">
    <location>
        <begin position="1"/>
        <end position="365"/>
    </location>
</feature>
<feature type="modified residue" description="N5-methylglutamine" evidence="1">
    <location>
        <position position="252"/>
    </location>
</feature>
<accession>B4F0M7</accession>
<protein>
    <recommendedName>
        <fullName evidence="1">Peptide chain release factor 2</fullName>
        <shortName evidence="1">RF-2</shortName>
    </recommendedName>
</protein>
<sequence length="365" mass="41224">MFEINPVKHKIEEVAERTQVLRGYLDYDAKKERLEEVNAELEQPDVWNEPEKAQALGKERSSLEAIVETIDQLEQGLEDVSGLLDLAVEADDEETFNEAVAELEGLNKKLEQLEFRRMFSGEYDSADCYLDLQAGSGGTEAQDWASMLMRMYLRWAESRGFKTEIIEESDGDVAGLKSATIKIIGEYAYGWLRTETGVHRLVRKSPFDSGGRRHTSFSSAFVYPEVDDNIDIEINPADLRIDVYRASGAGGQHVNKTESAVRITHVPTGLVTQCQNDRSQHKNKDQAMKQMKAKLYELEMQKKNADKQVMEDNKSDIGWGSQIRSYVLDDSRIKDLRTGVETRNTQAVLDGDLDKFIEASLKAGL</sequence>
<organism>
    <name type="scientific">Proteus mirabilis (strain HI4320)</name>
    <dbReference type="NCBI Taxonomy" id="529507"/>
    <lineage>
        <taxon>Bacteria</taxon>
        <taxon>Pseudomonadati</taxon>
        <taxon>Pseudomonadota</taxon>
        <taxon>Gammaproteobacteria</taxon>
        <taxon>Enterobacterales</taxon>
        <taxon>Morganellaceae</taxon>
        <taxon>Proteus</taxon>
    </lineage>
</organism>
<name>RF2_PROMH</name>
<evidence type="ECO:0000255" key="1">
    <source>
        <dbReference type="HAMAP-Rule" id="MF_00094"/>
    </source>
</evidence>
<dbReference type="EMBL" id="AM942759">
    <property type="protein sequence ID" value="CAR44054.1"/>
    <property type="molecule type" value="Genomic_DNA"/>
</dbReference>
<dbReference type="RefSeq" id="WP_012368216.1">
    <property type="nucleotide sequence ID" value="NC_010554.1"/>
</dbReference>
<dbReference type="SMR" id="B4F0M7"/>
<dbReference type="EnsemblBacteria" id="CAR44054">
    <property type="protein sequence ID" value="CAR44054"/>
    <property type="gene ID" value="PMI2009"/>
</dbReference>
<dbReference type="GeneID" id="23391224"/>
<dbReference type="KEGG" id="pmr:PMI2009"/>
<dbReference type="eggNOG" id="COG1186">
    <property type="taxonomic scope" value="Bacteria"/>
</dbReference>
<dbReference type="HOGENOM" id="CLU_220733_1_0_6"/>
<dbReference type="Proteomes" id="UP000008319">
    <property type="component" value="Chromosome"/>
</dbReference>
<dbReference type="GO" id="GO:0005737">
    <property type="term" value="C:cytoplasm"/>
    <property type="evidence" value="ECO:0007669"/>
    <property type="project" value="UniProtKB-SubCell"/>
</dbReference>
<dbReference type="GO" id="GO:0016149">
    <property type="term" value="F:translation release factor activity, codon specific"/>
    <property type="evidence" value="ECO:0007669"/>
    <property type="project" value="UniProtKB-UniRule"/>
</dbReference>
<dbReference type="FunFam" id="3.30.160.20:FF:000010">
    <property type="entry name" value="Peptide chain release factor 2"/>
    <property type="match status" value="1"/>
</dbReference>
<dbReference type="Gene3D" id="3.30.160.20">
    <property type="match status" value="1"/>
</dbReference>
<dbReference type="Gene3D" id="3.30.70.1660">
    <property type="match status" value="1"/>
</dbReference>
<dbReference type="Gene3D" id="1.20.58.410">
    <property type="entry name" value="Release factor"/>
    <property type="match status" value="1"/>
</dbReference>
<dbReference type="HAMAP" id="MF_00094">
    <property type="entry name" value="Rel_fac_2"/>
    <property type="match status" value="1"/>
</dbReference>
<dbReference type="InterPro" id="IPR005139">
    <property type="entry name" value="PCRF"/>
</dbReference>
<dbReference type="InterPro" id="IPR000352">
    <property type="entry name" value="Pep_chain_release_fac_I"/>
</dbReference>
<dbReference type="InterPro" id="IPR045853">
    <property type="entry name" value="Pep_chain_release_fac_I_sf"/>
</dbReference>
<dbReference type="InterPro" id="IPR004374">
    <property type="entry name" value="PrfB"/>
</dbReference>
<dbReference type="NCBIfam" id="TIGR00020">
    <property type="entry name" value="prfB"/>
    <property type="match status" value="1"/>
</dbReference>
<dbReference type="PANTHER" id="PTHR43116:SF3">
    <property type="entry name" value="CLASS I PEPTIDE CHAIN RELEASE FACTOR"/>
    <property type="match status" value="1"/>
</dbReference>
<dbReference type="PANTHER" id="PTHR43116">
    <property type="entry name" value="PEPTIDE CHAIN RELEASE FACTOR 2"/>
    <property type="match status" value="1"/>
</dbReference>
<dbReference type="Pfam" id="PF03462">
    <property type="entry name" value="PCRF"/>
    <property type="match status" value="1"/>
</dbReference>
<dbReference type="Pfam" id="PF00472">
    <property type="entry name" value="RF-1"/>
    <property type="match status" value="1"/>
</dbReference>
<dbReference type="SMART" id="SM00937">
    <property type="entry name" value="PCRF"/>
    <property type="match status" value="1"/>
</dbReference>
<dbReference type="SUPFAM" id="SSF75620">
    <property type="entry name" value="Release factor"/>
    <property type="match status" value="1"/>
</dbReference>
<dbReference type="PROSITE" id="PS00745">
    <property type="entry name" value="RF_PROK_I"/>
    <property type="match status" value="1"/>
</dbReference>